<evidence type="ECO:0000250" key="1"/>
<evidence type="ECO:0000250" key="2">
    <source>
        <dbReference type="UniProtKB" id="P16382"/>
    </source>
</evidence>
<evidence type="ECO:0000250" key="3">
    <source>
        <dbReference type="UniProtKB" id="P24394"/>
    </source>
</evidence>
<evidence type="ECO:0000255" key="4"/>
<evidence type="ECO:0000255" key="5">
    <source>
        <dbReference type="PROSITE-ProRule" id="PRU00316"/>
    </source>
</evidence>
<evidence type="ECO:0000256" key="6">
    <source>
        <dbReference type="SAM" id="MobiDB-lite"/>
    </source>
</evidence>
<evidence type="ECO:0000269" key="7">
    <source>
    </source>
</evidence>
<evidence type="ECO:0000303" key="8">
    <source>
    </source>
</evidence>
<evidence type="ECO:0000305" key="9"/>
<dbReference type="EMBL" id="AY081138">
    <property type="protein sequence ID" value="AAL87462.1"/>
    <property type="molecule type" value="mRNA"/>
</dbReference>
<dbReference type="EMBL" id="AY289616">
    <property type="protein sequence ID" value="AAQ56236.1"/>
    <property type="molecule type" value="mRNA"/>
</dbReference>
<dbReference type="RefSeq" id="NP_001075243.1">
    <molecule id="Q6WG24-1"/>
    <property type="nucleotide sequence ID" value="NM_001081774.2"/>
</dbReference>
<dbReference type="SMR" id="Q6WG24"/>
<dbReference type="FunCoup" id="Q6WG24">
    <property type="interactions" value="301"/>
</dbReference>
<dbReference type="STRING" id="9796.ENSECAP00000050346"/>
<dbReference type="GlyCosmos" id="Q6WG24">
    <property type="glycosylation" value="7 sites, No reported glycans"/>
</dbReference>
<dbReference type="PaxDb" id="9796-ENSECAP00000050346"/>
<dbReference type="GeneID" id="791252"/>
<dbReference type="KEGG" id="ecb:791252"/>
<dbReference type="CTD" id="3566"/>
<dbReference type="InParanoid" id="Q6WG24"/>
<dbReference type="OrthoDB" id="8962741at2759"/>
<dbReference type="Proteomes" id="UP000002281">
    <property type="component" value="Unplaced"/>
</dbReference>
<dbReference type="GO" id="GO:0009897">
    <property type="term" value="C:external side of plasma membrane"/>
    <property type="evidence" value="ECO:0000318"/>
    <property type="project" value="GO_Central"/>
</dbReference>
<dbReference type="GO" id="GO:0005576">
    <property type="term" value="C:extracellular region"/>
    <property type="evidence" value="ECO:0007669"/>
    <property type="project" value="UniProtKB-SubCell"/>
</dbReference>
<dbReference type="GO" id="GO:0004896">
    <property type="term" value="F:cytokine receptor activity"/>
    <property type="evidence" value="ECO:0000318"/>
    <property type="project" value="GO_Central"/>
</dbReference>
<dbReference type="GO" id="GO:0019221">
    <property type="term" value="P:cytokine-mediated signaling pathway"/>
    <property type="evidence" value="ECO:0000318"/>
    <property type="project" value="GO_Central"/>
</dbReference>
<dbReference type="GO" id="GO:0002532">
    <property type="term" value="P:production of molecular mediator involved in inflammatory response"/>
    <property type="evidence" value="ECO:0007669"/>
    <property type="project" value="InterPro"/>
</dbReference>
<dbReference type="CDD" id="cd00063">
    <property type="entry name" value="FN3"/>
    <property type="match status" value="1"/>
</dbReference>
<dbReference type="Gene3D" id="2.60.40.10">
    <property type="entry name" value="Immunoglobulins"/>
    <property type="match status" value="2"/>
</dbReference>
<dbReference type="InterPro" id="IPR003961">
    <property type="entry name" value="FN3_dom"/>
</dbReference>
<dbReference type="InterPro" id="IPR036116">
    <property type="entry name" value="FN3_sf"/>
</dbReference>
<dbReference type="InterPro" id="IPR003531">
    <property type="entry name" value="Hempt_rcpt_S_F1_CS"/>
</dbReference>
<dbReference type="InterPro" id="IPR013783">
    <property type="entry name" value="Ig-like_fold"/>
</dbReference>
<dbReference type="InterPro" id="IPR015319">
    <property type="entry name" value="IL-4_rcpt-alpha_N"/>
</dbReference>
<dbReference type="PANTHER" id="PTHR23037">
    <property type="entry name" value="CYTOKINE RECEPTOR"/>
    <property type="match status" value="1"/>
</dbReference>
<dbReference type="PANTHER" id="PTHR23037:SF32">
    <property type="entry name" value="INTERLEUKIN-4 RECEPTOR SUBUNIT ALPHA"/>
    <property type="match status" value="1"/>
</dbReference>
<dbReference type="Pfam" id="PF00041">
    <property type="entry name" value="fn3"/>
    <property type="match status" value="1"/>
</dbReference>
<dbReference type="Pfam" id="PF09238">
    <property type="entry name" value="IL4Ra_N"/>
    <property type="match status" value="1"/>
</dbReference>
<dbReference type="SUPFAM" id="SSF49265">
    <property type="entry name" value="Fibronectin type III"/>
    <property type="match status" value="2"/>
</dbReference>
<dbReference type="PROSITE" id="PS50853">
    <property type="entry name" value="FN3"/>
    <property type="match status" value="1"/>
</dbReference>
<dbReference type="PROSITE" id="PS01355">
    <property type="entry name" value="HEMATOPO_REC_S_F1"/>
    <property type="match status" value="1"/>
</dbReference>
<organism>
    <name type="scientific">Equus caballus</name>
    <name type="common">Horse</name>
    <dbReference type="NCBI Taxonomy" id="9796"/>
    <lineage>
        <taxon>Eukaryota</taxon>
        <taxon>Metazoa</taxon>
        <taxon>Chordata</taxon>
        <taxon>Craniata</taxon>
        <taxon>Vertebrata</taxon>
        <taxon>Euteleostomi</taxon>
        <taxon>Mammalia</taxon>
        <taxon>Eutheria</taxon>
        <taxon>Laurasiatheria</taxon>
        <taxon>Perissodactyla</taxon>
        <taxon>Equidae</taxon>
        <taxon>Equus</taxon>
    </lineage>
</organism>
<gene>
    <name type="primary">IL4R</name>
</gene>
<name>IL4RA_HORSE</name>
<protein>
    <recommendedName>
        <fullName>Interleukin-4 receptor subunit alpha</fullName>
        <shortName>IL-4 receptor subunit alpha</shortName>
        <shortName>IL-4R subunit alpha</shortName>
        <shortName>IL-4R-alpha</shortName>
        <shortName>IL-4RA</shortName>
    </recommendedName>
    <cdAntigenName>CD124</cdAntigenName>
</protein>
<reference key="1">
    <citation type="journal article" date="2004" name="Vet. Immunol. Immunopathol.">
        <title>Genomic characterization of equine interleukin-4 receptor alpha-chain (IL4R).</title>
        <authorList>
            <person name="Solberg O.D."/>
            <person name="Jackson K.A."/>
            <person name="Millon L.V."/>
            <person name="Stott J.L."/>
            <person name="Vandenplas M.L."/>
            <person name="Moore J.N."/>
            <person name="Watson J.L."/>
        </authorList>
    </citation>
    <scope>NUCLEOTIDE SEQUENCE [MRNA] (ISOFORMS 1 AND 2)</scope>
    <scope>VARIANTS VAL-464; SER-554; THR-559 AND ALA-572</scope>
    <source>
        <tissue>Monocyte</tissue>
    </source>
</reference>
<sequence>MGCLCPGLTLPVSCLILVWAAGSGSVKVLRLTACFSDYISASTCEWKMDRPTNCSAQLRLSYQLNDEFSDNLTCIPENREDEVCVCRMLMDNIVSEDVYELDLWAGNQLLWNSSFKPSRHVKPRAPQNLTVHAISHTWLLTWSNPYPLKNHLWSELTYLVNISKEDDPTDFKIYNVTYMDPTLRVTASTLKSRATYSARVKARAQNYNSTWSEWSPSTTWHNYYEQPLEQRLPLGVSISCVVILAICLSCYFSIIKIKKEWWDQIPNPAHSPLVAIVLQDSQVSLWGKQSRGQEPAKCPRWKTCLTKLLPCLLEHGLQKEEDSSKTVRNGPFQSPGKSAWHTVEVNHTILRPEIISVVPCVELCEAQVESEEEEVEEDRGSFCPSPESSGSGFQEGREGVAARLTESLFLGLLGAENGALGESCLLPPLGSAHMPWARISSAGPQEAASQGEEQPLNPESNPLATLTQSPGSLAFTEAPAVVADNPAYRSFSNSLSQPRGPGELDSDPQLAEHLGQVDPSIPSAPQPSEPPTALQPEPETWEQMLRQSVLQQGAAPAPASAPTGGYREFAQVVKQGGGAAGSGPSGEAGYKAFSSLLAGSAVCPGQSGVEASSGEGGYRPYESPDPGAPAPVPVPLFTFGLDVEPPHSPQNSLLPGGSPELPGPEPTVKGEDPRKPLLSAQQATDSLRDDLGSGIVYSALTCHLCGHLKQCHGQEEHGEAHTVASPCCGCCCGDRSSPPVSPVRALDPPPGGVPLEAGLSLASLGSLGLSEERKPSLFFQPAPGNAQSSSQTPLTVAMLSTGPTCTSAS</sequence>
<proteinExistence type="evidence at transcript level"/>
<feature type="signal peptide" evidence="1">
    <location>
        <begin position="1"/>
        <end position="25"/>
    </location>
</feature>
<feature type="chain" id="PRO_0000010886" description="Interleukin-4 receptor subunit alpha">
    <location>
        <begin position="26"/>
        <end position="809"/>
    </location>
</feature>
<feature type="topological domain" description="Extracellular" evidence="4">
    <location>
        <begin position="26"/>
        <end position="231"/>
    </location>
</feature>
<feature type="transmembrane region" description="Helical" evidence="4">
    <location>
        <begin position="232"/>
        <end position="255"/>
    </location>
</feature>
<feature type="topological domain" description="Cytoplasmic" evidence="4">
    <location>
        <begin position="256"/>
        <end position="809"/>
    </location>
</feature>
<feature type="domain" description="Fibronectin type-III" evidence="5">
    <location>
        <begin position="125"/>
        <end position="222"/>
    </location>
</feature>
<feature type="region of interest" description="Disordered" evidence="6">
    <location>
        <begin position="369"/>
        <end position="397"/>
    </location>
</feature>
<feature type="region of interest" description="Disordered" evidence="6">
    <location>
        <begin position="441"/>
        <end position="468"/>
    </location>
</feature>
<feature type="region of interest" description="Disordered" evidence="6">
    <location>
        <begin position="514"/>
        <end position="536"/>
    </location>
</feature>
<feature type="region of interest" description="Disordered" evidence="6">
    <location>
        <begin position="606"/>
        <end position="674"/>
    </location>
</feature>
<feature type="short sequence motif" description="WSXWS motif">
    <location>
        <begin position="211"/>
        <end position="215"/>
    </location>
</feature>
<feature type="short sequence motif" description="Box 1 motif">
    <location>
        <begin position="261"/>
        <end position="269"/>
    </location>
</feature>
<feature type="short sequence motif" description="ITIM motif">
    <location>
        <begin position="695"/>
        <end position="700"/>
    </location>
</feature>
<feature type="compositionally biased region" description="Polar residues" evidence="6">
    <location>
        <begin position="447"/>
        <end position="468"/>
    </location>
</feature>
<feature type="modified residue" description="Phosphoserine" evidence="2">
    <location>
        <position position="163"/>
    </location>
</feature>
<feature type="modified residue" description="Phosphotyrosine" evidence="3">
    <location>
        <position position="488"/>
    </location>
</feature>
<feature type="modified residue" description="Phosphotyrosine" evidence="3">
    <location>
        <position position="566"/>
    </location>
</feature>
<feature type="modified residue" description="Phosphotyrosine" evidence="3">
    <location>
        <position position="590"/>
    </location>
</feature>
<feature type="modified residue" description="Phosphotyrosine" evidence="3">
    <location>
        <position position="618"/>
    </location>
</feature>
<feature type="glycosylation site" description="N-linked (GlcNAc...) asparagine" evidence="4">
    <location>
        <position position="53"/>
    </location>
</feature>
<feature type="glycosylation site" description="N-linked (GlcNAc...) asparagine" evidence="4">
    <location>
        <position position="71"/>
    </location>
</feature>
<feature type="glycosylation site" description="N-linked (GlcNAc...) asparagine" evidence="4">
    <location>
        <position position="112"/>
    </location>
</feature>
<feature type="glycosylation site" description="N-linked (GlcNAc...) asparagine" evidence="4">
    <location>
        <position position="128"/>
    </location>
</feature>
<feature type="glycosylation site" description="N-linked (GlcNAc...) asparagine" evidence="4">
    <location>
        <position position="161"/>
    </location>
</feature>
<feature type="glycosylation site" description="N-linked (GlcNAc...) asparagine" evidence="4">
    <location>
        <position position="175"/>
    </location>
</feature>
<feature type="glycosylation site" description="N-linked (GlcNAc...) asparagine" evidence="4">
    <location>
        <position position="208"/>
    </location>
</feature>
<feature type="disulfide bond" evidence="1">
    <location>
        <begin position="34"/>
        <end position="44"/>
    </location>
</feature>
<feature type="disulfide bond" evidence="1">
    <location>
        <begin position="74"/>
        <end position="86"/>
    </location>
</feature>
<feature type="splice variant" id="VSP_011114" description="In isoform 2." evidence="8">
    <original>YY</original>
    <variation>SP</variation>
    <location>
        <begin position="223"/>
        <end position="224"/>
    </location>
</feature>
<feature type="splice variant" id="VSP_011115" description="In isoform 2." evidence="8">
    <location>
        <begin position="225"/>
        <end position="809"/>
    </location>
</feature>
<feature type="sequence variant" evidence="7">
    <original>A</original>
    <variation>V</variation>
    <location>
        <position position="464"/>
    </location>
</feature>
<feature type="sequence variant" evidence="7">
    <original>A</original>
    <variation>S</variation>
    <location>
        <position position="554"/>
    </location>
</feature>
<feature type="sequence variant" evidence="7">
    <original>A</original>
    <variation>T</variation>
    <location>
        <position position="559"/>
    </location>
</feature>
<feature type="sequence variant" evidence="7">
    <original>V</original>
    <variation>A</variation>
    <location>
        <position position="572"/>
    </location>
</feature>
<comment type="function">
    <text evidence="1">Receptor for both interleukin 4 and interleukin 13. Couples to the JAK1/2/3-STAT6 pathway. The IL4 response is involved in promoting Th2 differentiation. The IL4/IL13 responses are involved in regulating IgE production and, chemokine and mucus production at sites of allergic inflammation. In certain cell types, can signal through activation of insulin receptor substrates, IRS1/IRS2 (By similarity).</text>
</comment>
<comment type="subunit">
    <text evidence="2 3">The functional IL4 receptor is formed by initial binding of IL4 to IL4R. Subsequent recruitment to the complex of the common gamma chain, in immune cells, creates a type I receptor and, in non-immune cells, of IL13RA1 forms a type II receptor. IL4R can also interact with the IL13/IL13RA1 complex to form a similar type II receptor. Interacts with PIK3C3. Interacts with the SH2-containing phosphatases, PTPN6/SHIP1, PTPN11/SHIP2 and INPP5D/SHIP. Interacts with JAK1 through a Box 1-containing region; inhibited by SOCS5. Interacts with SOCS5; inhibits IL4 signaling. Interacts with JAK3. Interacts with CLM1. Interacts with IL13RA2.</text>
</comment>
<comment type="subcellular location">
    <subcellularLocation>
        <location>Cell membrane</location>
        <topology>Single-pass type I membrane protein</topology>
    </subcellularLocation>
</comment>
<comment type="subcellular location">
    <molecule>Isoform 2</molecule>
    <subcellularLocation>
        <location evidence="9">Secreted</location>
    </subcellularLocation>
</comment>
<comment type="alternative products">
    <event type="alternative splicing"/>
    <isoform>
        <id>Q6WG24-1</id>
        <name>1</name>
        <name>Membrane form</name>
        <sequence type="displayed"/>
    </isoform>
    <isoform>
        <id>Q6WG24-2</id>
        <name>2</name>
        <name>Soluble form</name>
        <sequence type="described" ref="VSP_011114 VSP_011115"/>
    </isoform>
</comment>
<comment type="domain">
    <text>The WSXWS motif appears to be necessary for proper protein folding and thereby efficient intracellular transport and cell-surface receptor binding.</text>
</comment>
<comment type="domain">
    <text>The box 1 motif is required for JAK interaction and/or activation.</text>
</comment>
<comment type="domain">
    <text>Contains 1 copy of a cytoplasmic motif that is referred to as the immunoreceptor tyrosine-based inhibitor motif (ITIM). This motif is involved in modulation of cellular responses. The phosphorylated ITIM motif can bind the SH2 domain of several SH2-containing phosphatases.</text>
</comment>
<comment type="PTM">
    <text evidence="1">On IL4 binding, phosphorylated on tyrosine residues in the cytoplasmic domain.</text>
</comment>
<comment type="similarity">
    <text evidence="9">Belongs to the type I cytokine receptor family. Type 4 subfamily.</text>
</comment>
<keyword id="KW-0025">Alternative splicing</keyword>
<keyword id="KW-1003">Cell membrane</keyword>
<keyword id="KW-1015">Disulfide bond</keyword>
<keyword id="KW-0325">Glycoprotein</keyword>
<keyword id="KW-0472">Membrane</keyword>
<keyword id="KW-0597">Phosphoprotein</keyword>
<keyword id="KW-0675">Receptor</keyword>
<keyword id="KW-1185">Reference proteome</keyword>
<keyword id="KW-0964">Secreted</keyword>
<keyword id="KW-0732">Signal</keyword>
<keyword id="KW-0812">Transmembrane</keyword>
<keyword id="KW-1133">Transmembrane helix</keyword>
<accession>Q6WG24</accession>
<accession>Q8MIR9</accession>